<gene>
    <name type="primary">MTNR1A</name>
</gene>
<protein>
    <recommendedName>
        <fullName>Melatonin receptor type 1A</fullName>
        <shortName>Mel-1A-R</shortName>
        <shortName>Mel1a receptor</shortName>
    </recommendedName>
</protein>
<accession>P48040</accession>
<accession>O46608</accession>
<reference key="1">
    <citation type="journal article" date="1994" name="Neuron">
        <title>Cloning and characterization of a mammalian melatonin receptor that mediates reproductive and circadian responses.</title>
        <authorList>
            <person name="Reppert S.M."/>
            <person name="Weaver D.R."/>
            <person name="Ebisawa T."/>
        </authorList>
    </citation>
    <scope>NUCLEOTIDE SEQUENCE [MRNA]</scope>
    <source>
        <tissue>Pituitary pars tuberalis</tissue>
    </source>
</reference>
<reference key="2">
    <citation type="journal article" date="1997" name="Biochim. Biophys. Acta">
        <title>Cloning and functional analysis of a polymorphic variant of the ovine Mel 1a melatonin receptor.</title>
        <authorList>
            <person name="Barrett P."/>
            <person name="Conway S."/>
            <person name="Jockers R."/>
            <person name="Strosberg A.D."/>
            <person name="Guardiola-Lemaitre B."/>
            <person name="Delagrange P."/>
            <person name="Morgan P.J."/>
        </authorList>
    </citation>
    <scope>NUCLEOTIDE SEQUENCE [MRNA]</scope>
</reference>
<comment type="function">
    <text evidence="1">High affinity receptor for melatonin. Likely to mediate the reproductive and circadian actions of melatonin. The activity of this receptor is mediated by pertussis toxin sensitive G proteins that inhibit adenylate cyclase activity. Possibly involved in sleep induction, by melatonin activation of the potassium channel KCNMA1/BK and the dissociation of G-beta and G-gamma subunits, thereby decreasing synaptic transmission (By similarity).</text>
</comment>
<comment type="subcellular location">
    <subcellularLocation>
        <location>Cell membrane</location>
        <topology>Multi-pass membrane protein</topology>
    </subcellularLocation>
</comment>
<comment type="similarity">
    <text evidence="3">Belongs to the G-protein coupled receptor 1 family.</text>
</comment>
<name>MTR1A_SHEEP</name>
<sequence>MAGRLWGSPGGTPKGNGSSALLNVSQAAPGAGDGVRPRPSWLAATLASILIFTIVVDIVGNLLVVLSVYRNKKLRNAGNVFVVSLAVADLLVAVYPYPLALASIVNNGWSLSSLHCQLSGFLMGLSVIGSVFSITGIAINRYCCICHSLRYGKLYSGTNSLCYVFLIWTLTLVAIVPNLCVGTLQYDPRIYSCTFTQSVSSAYTIAVVVFHFIVPMLVVVFCYLRIWALVLQVRWKVKPDNKPKLKPQDFRNFVTMFVVFVLFAICWAPLNFIGLVVASDPASMAPRIPEWLFVASYYMAYFNSCLNAIIYGLLNQNFRQEYRKIIVSLCTTKMFFVDSSNHVADRIKRKPSPLIANHNLIKVDSV</sequence>
<dbReference type="EMBL" id="U14109">
    <property type="protein sequence ID" value="AAB17721.1"/>
    <property type="molecule type" value="mRNA"/>
</dbReference>
<dbReference type="EMBL" id="AF045219">
    <property type="protein sequence ID" value="AAC02699.1"/>
    <property type="molecule type" value="mRNA"/>
</dbReference>
<dbReference type="PIR" id="I46469">
    <property type="entry name" value="I46469"/>
</dbReference>
<dbReference type="RefSeq" id="NP_001009725.1">
    <property type="nucleotide sequence ID" value="NM_001009725.1"/>
</dbReference>
<dbReference type="SMR" id="P48040"/>
<dbReference type="CORUM" id="P48040"/>
<dbReference type="STRING" id="9940.ENSOARP00000008886"/>
<dbReference type="BindingDB" id="P48040"/>
<dbReference type="GlyCosmos" id="P48040">
    <property type="glycosylation" value="2 sites, No reported glycans"/>
</dbReference>
<dbReference type="PaxDb" id="9940-ENSOARP00000008886"/>
<dbReference type="Ensembl" id="ENSOART00020029741">
    <property type="protein sequence ID" value="ENSOARP00020024594"/>
    <property type="gene ID" value="ENSOARG00020019337"/>
</dbReference>
<dbReference type="Ensembl" id="ENSOART00215019460">
    <property type="protein sequence ID" value="ENSOARP00215009770"/>
    <property type="gene ID" value="ENSOARG00215011736"/>
</dbReference>
<dbReference type="Ensembl" id="ENSOART00225017435">
    <property type="protein sequence ID" value="ENSOARP00225008533"/>
    <property type="gene ID" value="ENSOARG00225010570"/>
</dbReference>
<dbReference type="GeneID" id="443022"/>
<dbReference type="KEGG" id="oas:443022"/>
<dbReference type="CTD" id="4543"/>
<dbReference type="eggNOG" id="KOG3656">
    <property type="taxonomic scope" value="Eukaryota"/>
</dbReference>
<dbReference type="OrthoDB" id="10044919at2759"/>
<dbReference type="Proteomes" id="UP000002356">
    <property type="component" value="Unplaced"/>
</dbReference>
<dbReference type="GO" id="GO:0005886">
    <property type="term" value="C:plasma membrane"/>
    <property type="evidence" value="ECO:0007669"/>
    <property type="project" value="UniProtKB-SubCell"/>
</dbReference>
<dbReference type="GO" id="GO:0043235">
    <property type="term" value="C:receptor complex"/>
    <property type="evidence" value="ECO:0007669"/>
    <property type="project" value="Ensembl"/>
</dbReference>
<dbReference type="GO" id="GO:0042562">
    <property type="term" value="F:hormone binding"/>
    <property type="evidence" value="ECO:0007669"/>
    <property type="project" value="Ensembl"/>
</dbReference>
<dbReference type="GO" id="GO:0008502">
    <property type="term" value="F:melatonin receptor activity"/>
    <property type="evidence" value="ECO:0007669"/>
    <property type="project" value="Ensembl"/>
</dbReference>
<dbReference type="GO" id="GO:0007193">
    <property type="term" value="P:adenylate cyclase-inhibiting G protein-coupled receptor signaling pathway"/>
    <property type="evidence" value="ECO:0007669"/>
    <property type="project" value="Ensembl"/>
</dbReference>
<dbReference type="FunFam" id="1.20.1070.10:FF:000056">
    <property type="entry name" value="Melatonin receptor type 1A"/>
    <property type="match status" value="1"/>
</dbReference>
<dbReference type="Gene3D" id="1.20.1070.10">
    <property type="entry name" value="Rhodopsin 7-helix transmembrane proteins"/>
    <property type="match status" value="1"/>
</dbReference>
<dbReference type="InterPro" id="IPR000276">
    <property type="entry name" value="GPCR_Rhodpsn"/>
</dbReference>
<dbReference type="InterPro" id="IPR017452">
    <property type="entry name" value="GPCR_Rhodpsn_7TM"/>
</dbReference>
<dbReference type="InterPro" id="IPR002278">
    <property type="entry name" value="Mel_1A/1B_rcpt"/>
</dbReference>
<dbReference type="InterPro" id="IPR000025">
    <property type="entry name" value="Melatonin_rcpt"/>
</dbReference>
<dbReference type="PANTHER" id="PTHR24228">
    <property type="entry name" value="B2 BRADYKININ RECEPTOR/ANGIOTENSIN II RECEPTOR"/>
    <property type="match status" value="1"/>
</dbReference>
<dbReference type="PANTHER" id="PTHR24228:SF53">
    <property type="entry name" value="MELATONIN RECEPTOR TYPE 1A"/>
    <property type="match status" value="1"/>
</dbReference>
<dbReference type="Pfam" id="PF00001">
    <property type="entry name" value="7tm_1"/>
    <property type="match status" value="1"/>
</dbReference>
<dbReference type="PRINTS" id="PR00237">
    <property type="entry name" value="GPCRRHODOPSN"/>
</dbReference>
<dbReference type="PRINTS" id="PR01149">
    <property type="entry name" value="MELATONIN1AR"/>
</dbReference>
<dbReference type="PRINTS" id="PR00857">
    <property type="entry name" value="MELATONINR"/>
</dbReference>
<dbReference type="SMART" id="SM01381">
    <property type="entry name" value="7TM_GPCR_Srsx"/>
    <property type="match status" value="1"/>
</dbReference>
<dbReference type="SUPFAM" id="SSF81321">
    <property type="entry name" value="Family A G protein-coupled receptor-like"/>
    <property type="match status" value="1"/>
</dbReference>
<dbReference type="PROSITE" id="PS00237">
    <property type="entry name" value="G_PROTEIN_RECEP_F1_1"/>
    <property type="match status" value="1"/>
</dbReference>
<dbReference type="PROSITE" id="PS50262">
    <property type="entry name" value="G_PROTEIN_RECEP_F1_2"/>
    <property type="match status" value="1"/>
</dbReference>
<keyword id="KW-1003">Cell membrane</keyword>
<keyword id="KW-1015">Disulfide bond</keyword>
<keyword id="KW-0297">G-protein coupled receptor</keyword>
<keyword id="KW-0325">Glycoprotein</keyword>
<keyword id="KW-0472">Membrane</keyword>
<keyword id="KW-0675">Receptor</keyword>
<keyword id="KW-1185">Reference proteome</keyword>
<keyword id="KW-0807">Transducer</keyword>
<keyword id="KW-0812">Transmembrane</keyword>
<keyword id="KW-1133">Transmembrane helix</keyword>
<feature type="chain" id="PRO_0000069867" description="Melatonin receptor type 1A">
    <location>
        <begin position="1"/>
        <end position="366"/>
    </location>
</feature>
<feature type="topological domain" description="Extracellular" evidence="2">
    <location>
        <begin position="1"/>
        <end position="45"/>
    </location>
</feature>
<feature type="transmembrane region" description="Helical; Name=1" evidence="2">
    <location>
        <begin position="46"/>
        <end position="66"/>
    </location>
</feature>
<feature type="topological domain" description="Cytoplasmic" evidence="2">
    <location>
        <begin position="67"/>
        <end position="79"/>
    </location>
</feature>
<feature type="transmembrane region" description="Helical; Name=2" evidence="2">
    <location>
        <begin position="80"/>
        <end position="100"/>
    </location>
</feature>
<feature type="topological domain" description="Extracellular" evidence="2">
    <location>
        <begin position="101"/>
        <end position="118"/>
    </location>
</feature>
<feature type="transmembrane region" description="Helical; Name=3" evidence="2">
    <location>
        <begin position="119"/>
        <end position="139"/>
    </location>
</feature>
<feature type="topological domain" description="Cytoplasmic" evidence="2">
    <location>
        <begin position="140"/>
        <end position="158"/>
    </location>
</feature>
<feature type="transmembrane region" description="Helical; Name=4" evidence="2">
    <location>
        <begin position="159"/>
        <end position="179"/>
    </location>
</feature>
<feature type="topological domain" description="Extracellular" evidence="2">
    <location>
        <begin position="180"/>
        <end position="203"/>
    </location>
</feature>
<feature type="transmembrane region" description="Helical; Name=5" evidence="2">
    <location>
        <begin position="204"/>
        <end position="224"/>
    </location>
</feature>
<feature type="topological domain" description="Cytoplasmic" evidence="2">
    <location>
        <begin position="225"/>
        <end position="256"/>
    </location>
</feature>
<feature type="transmembrane region" description="Helical; Name=6" evidence="2">
    <location>
        <begin position="257"/>
        <end position="277"/>
    </location>
</feature>
<feature type="topological domain" description="Extracellular" evidence="2">
    <location>
        <begin position="278"/>
        <end position="290"/>
    </location>
</feature>
<feature type="transmembrane region" description="Helical; Name=7" evidence="2">
    <location>
        <begin position="291"/>
        <end position="311"/>
    </location>
</feature>
<feature type="topological domain" description="Cytoplasmic" evidence="2">
    <location>
        <begin position="312"/>
        <end position="366"/>
    </location>
</feature>
<feature type="glycosylation site" description="N-linked (GlcNAc...) asparagine" evidence="2">
    <location>
        <position position="16"/>
    </location>
</feature>
<feature type="glycosylation site" description="N-linked (GlcNAc...) asparagine" evidence="2">
    <location>
        <position position="23"/>
    </location>
</feature>
<feature type="disulfide bond" evidence="3">
    <location>
        <begin position="116"/>
        <end position="193"/>
    </location>
</feature>
<feature type="sequence variant" description="In Mel 1a(beta).">
    <original>A</original>
    <variation>D</variation>
    <location>
        <position position="282"/>
    </location>
</feature>
<feature type="sequence variant" description="In Mel 1a(beta).">
    <original>H</original>
    <variation>R</variation>
    <location>
        <position position="358"/>
    </location>
</feature>
<feature type="sequence variant" description="In Mel 1a(beta).">
    <original>I</original>
    <variation>V</variation>
    <location>
        <position position="361"/>
    </location>
</feature>
<organism>
    <name type="scientific">Ovis aries</name>
    <name type="common">Sheep</name>
    <dbReference type="NCBI Taxonomy" id="9940"/>
    <lineage>
        <taxon>Eukaryota</taxon>
        <taxon>Metazoa</taxon>
        <taxon>Chordata</taxon>
        <taxon>Craniata</taxon>
        <taxon>Vertebrata</taxon>
        <taxon>Euteleostomi</taxon>
        <taxon>Mammalia</taxon>
        <taxon>Eutheria</taxon>
        <taxon>Laurasiatheria</taxon>
        <taxon>Artiodactyla</taxon>
        <taxon>Ruminantia</taxon>
        <taxon>Pecora</taxon>
        <taxon>Bovidae</taxon>
        <taxon>Caprinae</taxon>
        <taxon>Ovis</taxon>
    </lineage>
</organism>
<proteinExistence type="evidence at transcript level"/>
<evidence type="ECO:0000250" key="1">
    <source>
        <dbReference type="UniProtKB" id="Q61184"/>
    </source>
</evidence>
<evidence type="ECO:0000255" key="2"/>
<evidence type="ECO:0000255" key="3">
    <source>
        <dbReference type="PROSITE-ProRule" id="PRU00521"/>
    </source>
</evidence>